<reference key="1">
    <citation type="journal article" date="1989" name="J. Biol. Chem.">
        <title>The molecular cloning of the gene encoding the Escherichia coli 75-kDa helicase and the determination of its nucleotide sequence and gentic map position.</title>
        <authorList>
            <person name="Wood E.R."/>
            <person name="Matson S.W."/>
        </authorList>
    </citation>
    <scope>NUCLEOTIDE SEQUENCE [GENOMIC DNA]</scope>
    <scope>PROTEIN SEQUENCE OF 1-27</scope>
</reference>
<reference key="2">
    <citation type="journal article" date="1996" name="DNA Res.">
        <title>A 718-kb DNA sequence of the Escherichia coli K-12 genome corresponding to the 12.7-28.0 min region on the linkage map.</title>
        <authorList>
            <person name="Oshima T."/>
            <person name="Aiba H."/>
            <person name="Baba T."/>
            <person name="Fujita K."/>
            <person name="Hayashi K."/>
            <person name="Honjo A."/>
            <person name="Ikemoto K."/>
            <person name="Inada T."/>
            <person name="Itoh T."/>
            <person name="Kajihara M."/>
            <person name="Kanai K."/>
            <person name="Kashimoto K."/>
            <person name="Kimura S."/>
            <person name="Kitagawa M."/>
            <person name="Makino K."/>
            <person name="Masuda S."/>
            <person name="Miki T."/>
            <person name="Mizobuchi K."/>
            <person name="Mori H."/>
            <person name="Motomura K."/>
            <person name="Nakamura Y."/>
            <person name="Nashimoto H."/>
            <person name="Nishio Y."/>
            <person name="Saito N."/>
            <person name="Sampei G."/>
            <person name="Seki Y."/>
            <person name="Tagami H."/>
            <person name="Takemoto K."/>
            <person name="Wada C."/>
            <person name="Yamamoto Y."/>
            <person name="Yano M."/>
            <person name="Horiuchi T."/>
        </authorList>
    </citation>
    <scope>NUCLEOTIDE SEQUENCE [LARGE SCALE GENOMIC DNA]</scope>
    <source>
        <strain>K12 / W3110 / ATCC 27325 / DSM 5911</strain>
    </source>
</reference>
<reference key="3">
    <citation type="journal article" date="1997" name="Science">
        <title>The complete genome sequence of Escherichia coli K-12.</title>
        <authorList>
            <person name="Blattner F.R."/>
            <person name="Plunkett G. III"/>
            <person name="Bloch C.A."/>
            <person name="Perna N.T."/>
            <person name="Burland V."/>
            <person name="Riley M."/>
            <person name="Collado-Vides J."/>
            <person name="Glasner J.D."/>
            <person name="Rode C.K."/>
            <person name="Mayhew G.F."/>
            <person name="Gregor J."/>
            <person name="Davis N.W."/>
            <person name="Kirkpatrick H.A."/>
            <person name="Goeden M.A."/>
            <person name="Rose D.J."/>
            <person name="Mau B."/>
            <person name="Shao Y."/>
        </authorList>
    </citation>
    <scope>NUCLEOTIDE SEQUENCE [LARGE SCALE GENOMIC DNA]</scope>
    <source>
        <strain>K12 / MG1655 / ATCC 47076</strain>
    </source>
</reference>
<reference key="4">
    <citation type="journal article" date="2006" name="Mol. Syst. Biol.">
        <title>Highly accurate genome sequences of Escherichia coli K-12 strains MG1655 and W3110.</title>
        <authorList>
            <person name="Hayashi K."/>
            <person name="Morooka N."/>
            <person name="Yamamoto Y."/>
            <person name="Fujita K."/>
            <person name="Isono K."/>
            <person name="Choi S."/>
            <person name="Ohtsubo E."/>
            <person name="Baba T."/>
            <person name="Wanner B.L."/>
            <person name="Mori H."/>
            <person name="Horiuchi T."/>
        </authorList>
    </citation>
    <scope>NUCLEOTIDE SEQUENCE [LARGE SCALE GENOMIC DNA]</scope>
    <source>
        <strain>K12 / W3110 / ATCC 27325 / DSM 5911</strain>
    </source>
</reference>
<protein>
    <recommendedName>
        <fullName>DNA helicase IV</fullName>
        <ecNumber>5.6.2.4</ecNumber>
    </recommendedName>
    <alternativeName>
        <fullName>75 kDa helicase</fullName>
    </alternativeName>
    <alternativeName>
        <fullName evidence="3">DNA 3'-5' helicase IV</fullName>
    </alternativeName>
</protein>
<organism>
    <name type="scientific">Escherichia coli (strain K12)</name>
    <dbReference type="NCBI Taxonomy" id="83333"/>
    <lineage>
        <taxon>Bacteria</taxon>
        <taxon>Pseudomonadati</taxon>
        <taxon>Pseudomonadota</taxon>
        <taxon>Gammaproteobacteria</taxon>
        <taxon>Enterobacterales</taxon>
        <taxon>Enterobacteriaceae</taxon>
        <taxon>Escherichia</taxon>
    </lineage>
</organism>
<comment type="function">
    <text>Helicase IV catalyzes the unwinding of duplex DNA in the 3' to 5' direction with respect to the bound single strand in a reaction that is dependent upon the hydrolysis of ATP.</text>
</comment>
<comment type="catalytic activity">
    <reaction>
        <text>Couples ATP hydrolysis with the unwinding of duplex DNA by translocating in the 3'-5' direction.</text>
        <dbReference type="EC" id="5.6.2.4"/>
    </reaction>
</comment>
<comment type="catalytic activity">
    <reaction>
        <text>ATP + H2O = ADP + phosphate + H(+)</text>
        <dbReference type="Rhea" id="RHEA:13065"/>
        <dbReference type="ChEBI" id="CHEBI:15377"/>
        <dbReference type="ChEBI" id="CHEBI:15378"/>
        <dbReference type="ChEBI" id="CHEBI:30616"/>
        <dbReference type="ChEBI" id="CHEBI:43474"/>
        <dbReference type="ChEBI" id="CHEBI:456216"/>
        <dbReference type="EC" id="5.6.2.4"/>
    </reaction>
</comment>
<comment type="interaction">
    <interactant intactId="EBI-551473">
        <id>P15038</id>
    </interactant>
    <interactant intactId="EBI-1116685">
        <id>P00936</id>
        <label>cyaA</label>
    </interactant>
    <organismsDiffer>false</organismsDiffer>
    <experiments>3</experiments>
</comment>
<comment type="interaction">
    <interactant intactId="EBI-551473">
        <id>P15038</id>
    </interactant>
    <interactant intactId="EBI-301077">
        <id>P0CE47</id>
        <label>tufA</label>
    </interactant>
    <organismsDiffer>false</organismsDiffer>
    <experiments>3</experiments>
</comment>
<comment type="similarity">
    <text evidence="3">Belongs to the helicase family. UvrD subfamily.</text>
</comment>
<gene>
    <name type="primary">helD</name>
    <name type="ordered locus">b0962</name>
    <name type="ordered locus">JW0945</name>
</gene>
<keyword id="KW-0067">ATP-binding</keyword>
<keyword id="KW-0903">Direct protein sequencing</keyword>
<keyword id="KW-0238">DNA-binding</keyword>
<keyword id="KW-0347">Helicase</keyword>
<keyword id="KW-0378">Hydrolase</keyword>
<keyword id="KW-0413">Isomerase</keyword>
<keyword id="KW-0547">Nucleotide-binding</keyword>
<keyword id="KW-1185">Reference proteome</keyword>
<dbReference type="EC" id="5.6.2.4"/>
<dbReference type="EMBL" id="J04726">
    <property type="protein sequence ID" value="AAA23952.1"/>
    <property type="molecule type" value="Genomic_DNA"/>
</dbReference>
<dbReference type="EMBL" id="U00096">
    <property type="protein sequence ID" value="AAC74048.1"/>
    <property type="molecule type" value="Genomic_DNA"/>
</dbReference>
<dbReference type="EMBL" id="AP009048">
    <property type="protein sequence ID" value="BAA35727.1"/>
    <property type="molecule type" value="Genomic_DNA"/>
</dbReference>
<dbReference type="PIR" id="A64837">
    <property type="entry name" value="HJECD4"/>
</dbReference>
<dbReference type="RefSeq" id="NP_415482.1">
    <property type="nucleotide sequence ID" value="NC_000913.3"/>
</dbReference>
<dbReference type="RefSeq" id="WP_001295354.1">
    <property type="nucleotide sequence ID" value="NZ_SSZK01000002.1"/>
</dbReference>
<dbReference type="SMR" id="P15038"/>
<dbReference type="BioGRID" id="4263362">
    <property type="interactions" value="140"/>
</dbReference>
<dbReference type="BioGRID" id="850587">
    <property type="interactions" value="1"/>
</dbReference>
<dbReference type="DIP" id="DIP-9876N"/>
<dbReference type="FunCoup" id="P15038">
    <property type="interactions" value="112"/>
</dbReference>
<dbReference type="IntAct" id="P15038">
    <property type="interactions" value="35"/>
</dbReference>
<dbReference type="STRING" id="511145.b0962"/>
<dbReference type="BindingDB" id="P15038"/>
<dbReference type="ChEMBL" id="CHEMBL4405"/>
<dbReference type="jPOST" id="P15038"/>
<dbReference type="PaxDb" id="511145-b0962"/>
<dbReference type="EnsemblBacteria" id="AAC74048">
    <property type="protein sequence ID" value="AAC74048"/>
    <property type="gene ID" value="b0962"/>
</dbReference>
<dbReference type="GeneID" id="946227"/>
<dbReference type="KEGG" id="ecj:JW0945"/>
<dbReference type="KEGG" id="eco:b0962"/>
<dbReference type="KEGG" id="ecoc:C3026_05880"/>
<dbReference type="PATRIC" id="fig|1411691.4.peg.1312"/>
<dbReference type="EchoBASE" id="EB0421"/>
<dbReference type="eggNOG" id="COG0210">
    <property type="taxonomic scope" value="Bacteria"/>
</dbReference>
<dbReference type="HOGENOM" id="CLU_006494_0_1_6"/>
<dbReference type="InParanoid" id="P15038"/>
<dbReference type="OMA" id="LDFMTIH"/>
<dbReference type="OrthoDB" id="5298826at2"/>
<dbReference type="PhylomeDB" id="P15038"/>
<dbReference type="BioCyc" id="EcoCyc:EG10426-MONOMER"/>
<dbReference type="BioCyc" id="MetaCyc:EG10426-MONOMER"/>
<dbReference type="PRO" id="PR:P15038"/>
<dbReference type="Proteomes" id="UP000000625">
    <property type="component" value="Chromosome"/>
</dbReference>
<dbReference type="GO" id="GO:0005829">
    <property type="term" value="C:cytosol"/>
    <property type="evidence" value="ECO:0000314"/>
    <property type="project" value="EcoCyc"/>
</dbReference>
<dbReference type="GO" id="GO:0043138">
    <property type="term" value="F:3'-5' DNA helicase activity"/>
    <property type="evidence" value="ECO:0000314"/>
    <property type="project" value="EcoCyc"/>
</dbReference>
<dbReference type="GO" id="GO:0005524">
    <property type="term" value="F:ATP binding"/>
    <property type="evidence" value="ECO:0007669"/>
    <property type="project" value="UniProtKB-KW"/>
</dbReference>
<dbReference type="GO" id="GO:0016887">
    <property type="term" value="F:ATP hydrolysis activity"/>
    <property type="evidence" value="ECO:0007669"/>
    <property type="project" value="RHEA"/>
</dbReference>
<dbReference type="GO" id="GO:0003677">
    <property type="term" value="F:DNA binding"/>
    <property type="evidence" value="ECO:0007669"/>
    <property type="project" value="UniProtKB-KW"/>
</dbReference>
<dbReference type="GO" id="GO:0000725">
    <property type="term" value="P:recombinational repair"/>
    <property type="evidence" value="ECO:0000318"/>
    <property type="project" value="GO_Central"/>
</dbReference>
<dbReference type="CDD" id="cd17932">
    <property type="entry name" value="DEXQc_UvrD"/>
    <property type="match status" value="1"/>
</dbReference>
<dbReference type="CDD" id="cd18807">
    <property type="entry name" value="SF1_C_UvrD"/>
    <property type="match status" value="1"/>
</dbReference>
<dbReference type="FunFam" id="3.40.50.300:FF:000975">
    <property type="entry name" value="DNA helicase"/>
    <property type="match status" value="1"/>
</dbReference>
<dbReference type="FunFam" id="3.40.50.300:FF:001240">
    <property type="entry name" value="DNA helicase"/>
    <property type="match status" value="1"/>
</dbReference>
<dbReference type="Gene3D" id="1.10.10.160">
    <property type="match status" value="1"/>
</dbReference>
<dbReference type="Gene3D" id="3.40.50.300">
    <property type="entry name" value="P-loop containing nucleotide triphosphate hydrolases"/>
    <property type="match status" value="2"/>
</dbReference>
<dbReference type="InterPro" id="IPR013986">
    <property type="entry name" value="DExx_box_DNA_helicase_dom_sf"/>
</dbReference>
<dbReference type="InterPro" id="IPR014017">
    <property type="entry name" value="DNA_helicase_UvrD-like_C"/>
</dbReference>
<dbReference type="InterPro" id="IPR000212">
    <property type="entry name" value="DNA_helicase_UvrD/REP"/>
</dbReference>
<dbReference type="InterPro" id="IPR022161">
    <property type="entry name" value="Helicase_IV_N"/>
</dbReference>
<dbReference type="InterPro" id="IPR027417">
    <property type="entry name" value="P-loop_NTPase"/>
</dbReference>
<dbReference type="InterPro" id="IPR014016">
    <property type="entry name" value="UvrD-like_ATP-bd"/>
</dbReference>
<dbReference type="NCBIfam" id="NF008276">
    <property type="entry name" value="PRK11054.1"/>
    <property type="match status" value="1"/>
</dbReference>
<dbReference type="PANTHER" id="PTHR11070:SF63">
    <property type="entry name" value="DNA HELICASE IV"/>
    <property type="match status" value="1"/>
</dbReference>
<dbReference type="PANTHER" id="PTHR11070">
    <property type="entry name" value="UVRD / RECB / PCRA DNA HELICASE FAMILY MEMBER"/>
    <property type="match status" value="1"/>
</dbReference>
<dbReference type="Pfam" id="PF12462">
    <property type="entry name" value="Helicase_IV_N"/>
    <property type="match status" value="1"/>
</dbReference>
<dbReference type="Pfam" id="PF00580">
    <property type="entry name" value="UvrD-helicase"/>
    <property type="match status" value="1"/>
</dbReference>
<dbReference type="Pfam" id="PF13361">
    <property type="entry name" value="UvrD_C"/>
    <property type="match status" value="1"/>
</dbReference>
<dbReference type="SUPFAM" id="SSF52540">
    <property type="entry name" value="P-loop containing nucleoside triphosphate hydrolases"/>
    <property type="match status" value="1"/>
</dbReference>
<dbReference type="PROSITE" id="PS51198">
    <property type="entry name" value="UVRD_HELICASE_ATP_BIND"/>
    <property type="match status" value="1"/>
</dbReference>
<feature type="chain" id="PRO_0000102049" description="DNA helicase IV">
    <location>
        <begin position="1"/>
        <end position="684"/>
    </location>
</feature>
<feature type="domain" description="UvrD-like helicase ATP-binding" evidence="2">
    <location>
        <begin position="195"/>
        <end position="505"/>
    </location>
</feature>
<feature type="binding site" evidence="3">
    <location>
        <begin position="216"/>
        <end position="223"/>
    </location>
    <ligand>
        <name>ATP</name>
        <dbReference type="ChEBI" id="CHEBI:30616"/>
    </ligand>
</feature>
<feature type="binding site" evidence="1">
    <location>
        <position position="503"/>
    </location>
    <ligand>
        <name>ATP</name>
        <dbReference type="ChEBI" id="CHEBI:30616"/>
    </ligand>
</feature>
<feature type="sequence conflict" description="In Ref. 1; AAA23952." evidence="3" ref="1">
    <original>H</original>
    <variation>P</variation>
    <location>
        <position position="70"/>
    </location>
</feature>
<feature type="sequence conflict" description="In Ref. 1; AAA23952." evidence="3" ref="1">
    <original>SALP</original>
    <variation>LRVA</variation>
    <location>
        <begin position="137"/>
        <end position="140"/>
    </location>
</feature>
<feature type="sequence conflict" description="In Ref. 1; AAA23952." evidence="3" ref="1">
    <original>MH</original>
    <variation>ID</variation>
    <location>
        <begin position="365"/>
        <end position="366"/>
    </location>
</feature>
<name>HELD_ECOLI</name>
<proteinExistence type="evidence at protein level"/>
<sequence length="684" mass="77976">MELKATTLGKRLAQHPYDRAVILNAGIKVSGDRHEYLIPFNQLLAIHCKRGLVWGELEFVLPDEKVVRLHGTEWGETQRFYHHLDAHWRRWSGEMSEIASGVLRQQLDLIATRTGENKWLTREQTSGVQQQIRQALSALPLPVNRLEEFDNCREAWRKCQAWLKDIESARLQHNQAYTEAMLTEYADFFRQVESSPLNPAQARAVVNGEHSLLVLAGAGSGKTSVLVARAGWLLARGEASPEQILLLAFGRKAAEEMDERIRERLHTEDITARTFHALALHIIQQGSKKVPIVSKLENDTAARHELFIAEWRKQCSEKKAQAKGWRQWLTEEMQWSVPEGNFWDDEKLQRRLASRLDRWVSLMRMHGGAQAEMIASAPEEIRDLFSKRIKLMAPLLKAWKGALKAENAVDFSGLIHQAIVILEKGRFISPWKHILVDEFQDISPQRAALLAALRKQNSQTTLFAVGDDWQAIYRFSGAQMSLTTAFHENFGEGERCDLDTTYRFNSRIGEVANRFIQQNPGQLKKPLNSLTNGDKKAVTLLDESQLDALLDKLSGYAKPEERILILARYHHMRPASLEKAATRWPKLQIDFMTIHASKGQQADYVIIVGLQEGSDGFPAAARESIMEEALLPPVEDFPDAEERRLMYVALTRARHRVWALFNKENPSPFVEILKNLDVPVARKP</sequence>
<evidence type="ECO:0000250" key="1"/>
<evidence type="ECO:0000255" key="2">
    <source>
        <dbReference type="PROSITE-ProRule" id="PRU00560"/>
    </source>
</evidence>
<evidence type="ECO:0000305" key="3"/>
<accession>P15038</accession>
<accession>P77623</accession>